<name>KA142_OLIMR</name>
<evidence type="ECO:0000269" key="1">
    <source>
    </source>
</evidence>
<evidence type="ECO:0000269" key="2">
    <source>
    </source>
</evidence>
<evidence type="ECO:0000269" key="3">
    <source>
    </source>
</evidence>
<evidence type="ECO:0000305" key="4"/>
<evidence type="ECO:0000305" key="5">
    <source>
    </source>
</evidence>
<evidence type="ECO:0007829" key="6">
    <source>
        <dbReference type="PDB" id="1PVZ"/>
    </source>
</evidence>
<proteinExistence type="evidence at protein level"/>
<sequence>MKIFFAILLILAVCSMAIWTVNGTPFAIKCATDADCSRKCPGNPPCRNGFCACT</sequence>
<dbReference type="EMBL" id="AJ277727">
    <property type="protein sequence ID" value="CAC38036.1"/>
    <property type="molecule type" value="mRNA"/>
</dbReference>
<dbReference type="EMBL" id="AJ277730">
    <property type="protein sequence ID" value="CAC38039.1"/>
    <property type="molecule type" value="Genomic_DNA"/>
</dbReference>
<dbReference type="EMBL" id="AF159975">
    <property type="protein sequence ID" value="AAK61822.1"/>
    <property type="molecule type" value="mRNA"/>
</dbReference>
<dbReference type="EMBL" id="AF135817">
    <property type="protein sequence ID" value="AAQ13566.1"/>
    <property type="molecule type" value="mRNA"/>
</dbReference>
<dbReference type="PDB" id="1PVZ">
    <property type="method" value="NMR"/>
    <property type="chains" value="A=24-54"/>
</dbReference>
<dbReference type="PDBsum" id="1PVZ"/>
<dbReference type="SMR" id="Q95NK7"/>
<dbReference type="EvolutionaryTrace" id="Q95NK7"/>
<dbReference type="GO" id="GO:0005576">
    <property type="term" value="C:extracellular region"/>
    <property type="evidence" value="ECO:0007669"/>
    <property type="project" value="UniProtKB-SubCell"/>
</dbReference>
<dbReference type="GO" id="GO:0015459">
    <property type="term" value="F:potassium channel regulator activity"/>
    <property type="evidence" value="ECO:0007669"/>
    <property type="project" value="UniProtKB-KW"/>
</dbReference>
<dbReference type="GO" id="GO:0090729">
    <property type="term" value="F:toxin activity"/>
    <property type="evidence" value="ECO:0007669"/>
    <property type="project" value="UniProtKB-KW"/>
</dbReference>
<dbReference type="InterPro" id="IPR036574">
    <property type="entry name" value="Scorpion_toxin-like_sf"/>
</dbReference>
<dbReference type="SUPFAM" id="SSF57095">
    <property type="entry name" value="Scorpion toxin-like"/>
    <property type="match status" value="1"/>
</dbReference>
<protein>
    <recommendedName>
        <fullName>Potassium channel toxin alpha-KTx 14.2</fullName>
    </recommendedName>
    <alternativeName>
        <fullName>BmKK2</fullName>
    </alternativeName>
    <alternativeName>
        <fullName>BmTXKS3</fullName>
    </alternativeName>
    <alternativeName>
        <fullName>KK1</fullName>
    </alternativeName>
    <alternativeName>
        <fullName>Neurotoxin BmP07</fullName>
    </alternativeName>
    <alternativeName>
        <fullName>Potassium ion channel blocker P07</fullName>
    </alternativeName>
    <alternativeName>
        <fullName>Toxin Kk2</fullName>
    </alternativeName>
    <component>
        <recommendedName>
            <fullName>BmKK2-b</fullName>
        </recommendedName>
    </component>
</protein>
<reference key="1">
    <citation type="journal article" date="2001" name="Biochimie">
        <title>Molecular cloning and characterization of four scorpion K(+)-toxin-like peptides: a new subfamily of venom peptides (alpha-KTx14) and genomic analysis of a member.</title>
        <authorList>
            <person name="Zeng X.-C."/>
            <person name="Peng F."/>
            <person name="Luo F."/>
            <person name="Zhu S.-Y."/>
            <person name="Liu H."/>
            <person name="Li W.-X."/>
        </authorList>
    </citation>
    <scope>NUCLEOTIDE SEQUENCE [GENOMIC DNA / MRNA]</scope>
    <source>
        <tissue>Venom gland</tissue>
    </source>
</reference>
<reference key="2">
    <citation type="journal article" date="2002" name="Comp. Biochem. Physiol.">
        <title>Precursors of three unique cysteine-rich peptides from the scorpion Buthus martensii Karsch.</title>
        <authorList>
            <person name="Zhu S.-Y."/>
            <person name="Li W.-X."/>
        </authorList>
    </citation>
    <scope>NUCLEOTIDE SEQUENCE [MRNA]</scope>
    <source>
        <tissue>Venom gland</tissue>
    </source>
</reference>
<reference key="3">
    <citation type="journal article" date="2004" name="Toxicon">
        <title>Purification and pharmacological characterization of BmKK2 (alpha-KTx 14.2), a novel potassium channel-blocking peptide, from the venom of Asian scorpion Buthus martensi Karsch.</title>
        <authorList>
            <person name="Li M.H."/>
            <person name="Zhang N.X."/>
            <person name="Chen X.Q."/>
            <person name="Wu G."/>
            <person name="Wu H."/>
            <person name="Hu G.Y."/>
        </authorList>
    </citation>
    <scope>PROTEIN SEQUENCE OF 24-54</scope>
    <scope>FUNCTION</scope>
    <scope>MASS SPECTROMETRY</scope>
    <source>
        <tissue>Venom</tissue>
    </source>
</reference>
<reference key="4">
    <citation type="journal article" date="2012" name="Proteomics">
        <title>Short-chain peptides identification of scorpion Buthus martensi Karsch venom by employing high orthogonal 2D-HPLC system and tandem mass spectrometry.</title>
        <authorList>
            <person name="Xu J."/>
            <person name="Zhang X."/>
            <person name="Guo Z."/>
            <person name="Yan J."/>
            <person name="Yu L."/>
            <person name="Li X."/>
            <person name="Xue X."/>
            <person name="Liang X."/>
        </authorList>
    </citation>
    <scope>PROTEIN SEQUENCE OF 26-29</scope>
    <scope>SUBCELLULAR LOCATION</scope>
    <scope>MASS SPECTROMETRY</scope>
    <source>
        <tissue>Venom</tissue>
    </source>
</reference>
<reference key="5">
    <citation type="journal article" date="2004" name="Proteins">
        <title>Solution structure of BmKK2, a new potassium channel blocker from the venom of Chinese scorpion Buthus martensi Karsch.</title>
        <authorList>
            <person name="Zhang N."/>
            <person name="Li M."/>
            <person name="Chen X."/>
            <person name="Wang Y."/>
            <person name="Wu G."/>
            <person name="Hu G."/>
            <person name="Wu H."/>
        </authorList>
    </citation>
    <scope>STRUCTURE BY NMR OF 24-54</scope>
    <scope>FUNCTION</scope>
    <scope>DISULFIDE BONDS</scope>
</reference>
<accession>Q95NK7</accession>
<accession>Q549F2</accession>
<organism>
    <name type="scientific">Olivierus martensii</name>
    <name type="common">Manchurian scorpion</name>
    <name type="synonym">Mesobuthus martensii</name>
    <dbReference type="NCBI Taxonomy" id="34649"/>
    <lineage>
        <taxon>Eukaryota</taxon>
        <taxon>Metazoa</taxon>
        <taxon>Ecdysozoa</taxon>
        <taxon>Arthropoda</taxon>
        <taxon>Chelicerata</taxon>
        <taxon>Arachnida</taxon>
        <taxon>Scorpiones</taxon>
        <taxon>Buthida</taxon>
        <taxon>Buthoidea</taxon>
        <taxon>Buthidae</taxon>
        <taxon>Olivierus</taxon>
    </lineage>
</organism>
<feature type="signal peptide" evidence="2">
    <location>
        <begin position="1"/>
        <end position="23"/>
    </location>
</feature>
<feature type="chain" id="PRO_0000035334" description="Potassium channel toxin alpha-KTx 14.2" evidence="2">
    <location>
        <begin position="24"/>
        <end position="54"/>
    </location>
</feature>
<feature type="peptide" id="PRO_0000431602" description="BmKK2-b">
    <location>
        <begin position="26"/>
        <end position="54"/>
    </location>
</feature>
<feature type="disulfide bond" evidence="1">
    <location>
        <begin position="30"/>
        <end position="46"/>
    </location>
</feature>
<feature type="disulfide bond" evidence="1">
    <location>
        <begin position="36"/>
        <end position="51"/>
    </location>
</feature>
<feature type="disulfide bond" evidence="1">
    <location>
        <begin position="40"/>
        <end position="53"/>
    </location>
</feature>
<feature type="strand" evidence="6">
    <location>
        <begin position="27"/>
        <end position="29"/>
    </location>
</feature>
<feature type="helix" evidence="6">
    <location>
        <begin position="33"/>
        <end position="39"/>
    </location>
</feature>
<feature type="strand" evidence="6">
    <location>
        <begin position="40"/>
        <end position="42"/>
    </location>
</feature>
<feature type="strand" evidence="6">
    <location>
        <begin position="50"/>
        <end position="52"/>
    </location>
</feature>
<comment type="function">
    <text evidence="1 2">Inhibits potassium channels. May be active towards small conductance calcium-activated potassium channels (KCNN, SK), and less active towards voltage-gated potassium channels (Kv/KCN).</text>
</comment>
<comment type="subcellular location">
    <subcellularLocation>
        <location evidence="3">Secreted</location>
    </subcellularLocation>
</comment>
<comment type="tissue specificity">
    <text evidence="5">Expressed by the venom gland.</text>
</comment>
<comment type="domain">
    <text evidence="1">Has the structural arrangement of an alpha-helix connected to a beta-sheet by disulfide bonds (CSalpha/beta).</text>
</comment>
<comment type="mass spectrometry">
    <molecule>Potassium channel toxin alpha-KTx 14.2</molecule>
</comment>
<comment type="mass spectrometry">
    <molecule>BmKK2-b</molecule>
    <text>Monoisotopic mass.</text>
</comment>
<comment type="similarity">
    <text evidence="4">Belongs to the short scorpion toxin superfamily. Potassium channel inhibitor family. Alpha-KTx 14 subfamily.</text>
</comment>
<keyword id="KW-0002">3D-structure</keyword>
<keyword id="KW-1221">Calcium-activated potassium channel impairing toxin</keyword>
<keyword id="KW-0903">Direct protein sequencing</keyword>
<keyword id="KW-1015">Disulfide bond</keyword>
<keyword id="KW-0872">Ion channel impairing toxin</keyword>
<keyword id="KW-0528">Neurotoxin</keyword>
<keyword id="KW-0632">Potassium channel impairing toxin</keyword>
<keyword id="KW-0964">Secreted</keyword>
<keyword id="KW-0732">Signal</keyword>
<keyword id="KW-0800">Toxin</keyword>
<keyword id="KW-1220">Voltage-gated potassium channel impairing toxin</keyword>